<dbReference type="EMBL" id="M95169">
    <property type="protein sequence ID" value="AAA70242.1"/>
    <property type="molecule type" value="Genomic_RNA"/>
</dbReference>
<dbReference type="EMBL" id="M28565">
    <property type="protein sequence ID" value="AAA46214.1"/>
    <property type="molecule type" value="Genomic_RNA"/>
</dbReference>
<dbReference type="EMBL" id="DQ001339">
    <property type="protein sequence ID" value="AAY24440.1"/>
    <property type="molecule type" value="Genomic_RNA"/>
</dbReference>
<dbReference type="RefSeq" id="NP_040838.1">
    <property type="nucleotide sequence ID" value="NC_001451.1"/>
</dbReference>
<dbReference type="PDB" id="2BTL">
    <property type="method" value="X-ray"/>
    <property type="resolution" value="1.95 A"/>
    <property type="chains" value="A/B=29-160"/>
</dbReference>
<dbReference type="PDB" id="2BXX">
    <property type="method" value="X-ray"/>
    <property type="resolution" value="1.85 A"/>
    <property type="chains" value="A/B=29-160"/>
</dbReference>
<dbReference type="PDB" id="2CA1">
    <property type="method" value="X-ray"/>
    <property type="resolution" value="2.60 A"/>
    <property type="chains" value="A/B=218-326"/>
</dbReference>
<dbReference type="PDBsum" id="2BTL"/>
<dbReference type="PDBsum" id="2BXX"/>
<dbReference type="PDBsum" id="2CA1"/>
<dbReference type="SMR" id="P69596"/>
<dbReference type="iPTMnet" id="P69596"/>
<dbReference type="GeneID" id="1489745"/>
<dbReference type="KEGG" id="vg:1489745"/>
<dbReference type="EvolutionaryTrace" id="P69596"/>
<dbReference type="Proteomes" id="UP000006717">
    <property type="component" value="Segment"/>
</dbReference>
<dbReference type="Proteomes" id="UP000180342">
    <property type="component" value="Genome"/>
</dbReference>
<dbReference type="GO" id="GO:0044172">
    <property type="term" value="C:host cell endoplasmic reticulum-Golgi intermediate compartment"/>
    <property type="evidence" value="ECO:0007669"/>
    <property type="project" value="UniProtKB-SubCell"/>
</dbReference>
<dbReference type="GO" id="GO:0044177">
    <property type="term" value="C:host cell Golgi apparatus"/>
    <property type="evidence" value="ECO:0007669"/>
    <property type="project" value="UniProtKB-SubCell"/>
</dbReference>
<dbReference type="GO" id="GO:1990904">
    <property type="term" value="C:ribonucleoprotein complex"/>
    <property type="evidence" value="ECO:0007669"/>
    <property type="project" value="UniProtKB-KW"/>
</dbReference>
<dbReference type="GO" id="GO:0019013">
    <property type="term" value="C:viral nucleocapsid"/>
    <property type="evidence" value="ECO:0007669"/>
    <property type="project" value="UniProtKB-UniRule"/>
</dbReference>
<dbReference type="GO" id="GO:0042802">
    <property type="term" value="F:identical protein binding"/>
    <property type="evidence" value="ECO:0000353"/>
    <property type="project" value="IntAct"/>
</dbReference>
<dbReference type="GO" id="GO:0003723">
    <property type="term" value="F:RNA binding"/>
    <property type="evidence" value="ECO:0007669"/>
    <property type="project" value="UniProtKB-UniRule"/>
</dbReference>
<dbReference type="CDD" id="cd21595">
    <property type="entry name" value="CoV_N-CTD"/>
    <property type="match status" value="1"/>
</dbReference>
<dbReference type="CDD" id="cd21554">
    <property type="entry name" value="CoV_N-NTD"/>
    <property type="match status" value="1"/>
</dbReference>
<dbReference type="HAMAP" id="MF_04097">
    <property type="entry name" value="GAMMA_CORONA_NCAP"/>
    <property type="match status" value="1"/>
</dbReference>
<dbReference type="InterPro" id="IPR044344">
    <property type="entry name" value="N_prot_C_CoV"/>
</dbReference>
<dbReference type="InterPro" id="IPR044345">
    <property type="entry name" value="N_prot_N_CoV"/>
</dbReference>
<dbReference type="InterPro" id="IPR042547">
    <property type="entry name" value="NCAP_gCoV"/>
</dbReference>
<dbReference type="InterPro" id="IPR001218">
    <property type="entry name" value="Nucleocap_CoV"/>
</dbReference>
<dbReference type="InterPro" id="IPR037179">
    <property type="entry name" value="Nucleocapsid_C"/>
</dbReference>
<dbReference type="InterPro" id="IPR037195">
    <property type="entry name" value="Nucleocapsid_N"/>
</dbReference>
<dbReference type="Pfam" id="PF00937">
    <property type="entry name" value="CoV_nucleocap"/>
    <property type="match status" value="1"/>
</dbReference>
<dbReference type="PIRSF" id="PIRSF003888">
    <property type="entry name" value="Corona_nucleocap"/>
    <property type="match status" value="1"/>
</dbReference>
<dbReference type="SUPFAM" id="SSF110304">
    <property type="entry name" value="Coronavirus RNA-binding domain"/>
    <property type="match status" value="1"/>
</dbReference>
<dbReference type="SUPFAM" id="SSF103068">
    <property type="entry name" value="Nucleocapsid protein dimerization domain"/>
    <property type="match status" value="1"/>
</dbReference>
<dbReference type="PROSITE" id="PS51929">
    <property type="entry name" value="COV_N_CTD"/>
    <property type="match status" value="1"/>
</dbReference>
<dbReference type="PROSITE" id="PS51928">
    <property type="entry name" value="COV_N_NTD"/>
    <property type="match status" value="1"/>
</dbReference>
<reference key="1">
    <citation type="journal article" date="1985" name="J. Gen. Virol.">
        <title>Sequences of the nucleocapsid genes from two strains of avian infectious bronchitis virus.</title>
        <authorList>
            <person name="Boursnell M.E.G."/>
            <person name="Binns M.M."/>
            <person name="Foulds I.J."/>
            <person name="Brown T.D.K."/>
        </authorList>
    </citation>
    <scope>NUCLEOTIDE SEQUENCE [GENOMIC RNA]</scope>
</reference>
<reference key="2">
    <citation type="journal article" date="1987" name="J. Gen. Virol.">
        <title>Completion of the sequence of the genome of the coronavirus avian infectious bronchitis virus.</title>
        <authorList>
            <person name="Boursnell M.E.G."/>
            <person name="Brown T.D.K."/>
            <person name="Foulds I.J."/>
            <person name="Green P.F."/>
            <person name="Tomley F.M."/>
            <person name="Binns M.M."/>
        </authorList>
    </citation>
    <scope>NUCLEOTIDE SEQUENCE [GENOMIC RNA]</scope>
</reference>
<reference key="3">
    <citation type="journal article" date="2005" name="Biochem. Biophys. Res. Commun.">
        <title>Selection of and recombination between minor variants lead to the adaptation of an avian coronavirus to primate cells.</title>
        <authorList>
            <person name="Fang S.G."/>
            <person name="Shen S."/>
            <person name="Tay F.P."/>
            <person name="Liu D.X."/>
        </authorList>
    </citation>
    <scope>NUCLEOTIDE SEQUENCE [GENOMIC RNA]</scope>
    <source>
        <strain>Isolate Vero cell-adapted p65</strain>
    </source>
</reference>
<reference key="4">
    <citation type="journal article" date="2001" name="J. Virol.">
        <title>The coronavirus infectious bronchitis virus nucleoprotein localizes to the nucleolus.</title>
        <authorList>
            <person name="Hiscox J.A."/>
            <person name="Wurm T."/>
            <person name="Wilson L."/>
            <person name="Britton P."/>
            <person name="Cavanagh D."/>
            <person name="Brooks G."/>
        </authorList>
    </citation>
    <scope>SUBCELLULAR LOCATION</scope>
</reference>
<reference key="5">
    <citation type="journal article" date="2001" name="J. Virol.">
        <title>Localization to the nucleolus is a common feature of coronavirus nucleoproteins, and the protein may disrupt host cell division.</title>
        <authorList>
            <person name="Wurm T."/>
            <person name="Chen H."/>
            <person name="Hodgson T."/>
            <person name="Britton P."/>
            <person name="Brooks G."/>
            <person name="Hiscox J.A."/>
        </authorList>
    </citation>
    <scope>SUBCELLULAR LOCATION</scope>
</reference>
<reference key="6">
    <citation type="journal article" date="2005" name="J. Virol.">
        <title>Mass spectroscopic characterization of the coronavirus infectious bronchitis virus nucleoprotein and elucidation of the role of phosphorylation in RNA binding by using surface plasmon resonance.</title>
        <authorList>
            <person name="Chen H."/>
            <person name="Gill A."/>
            <person name="Dove B.K."/>
            <person name="Emmett S.R."/>
            <person name="Kemp C.F."/>
            <person name="Ritchie M.A."/>
            <person name="Dee M."/>
            <person name="Hiscox J.A."/>
        </authorList>
    </citation>
    <scope>PHOSPHORYLATION AT SER-190; SER-192; THR-378 AND SER-379</scope>
    <scope>DISULFIDE BONDS</scope>
</reference>
<reference key="7">
    <citation type="journal article" date="2005" name="Structure">
        <title>The nucleocapsid protein of coronavirus infectious bronchitis virus: crystal structure of its N-terminal domain and multimerization properties.</title>
        <authorList>
            <person name="Fan H."/>
            <person name="Ooi A."/>
            <person name="Tan Y.W."/>
            <person name="Wang S."/>
            <person name="Fang S."/>
            <person name="Liu D.X."/>
            <person name="Lescar J."/>
        </authorList>
    </citation>
    <scope>X-RAY CRYSTALLOGRAPHY (1.95 ANGSTROMS) OF 29-160</scope>
</reference>
<comment type="function">
    <text evidence="1">Packages the positive strand viral genome RNA into a helical ribonucleocapsid (RNP) and plays a fundamental role during virion assembly through its interactions with the viral genome and membrane protein M. Plays an important role in enhancing the efficiency of subgenomic viral RNA transcription as well as viral replication.</text>
</comment>
<comment type="subunit">
    <text evidence="1">Homooligomer. Both monomeric and oligomeric forms interact with RNA. Interacts with protein M. Interacts with NSP3; this interaction serves to tether the genome to the newly translated replicase-transcriptase complex at a very early stage of infection.</text>
</comment>
<comment type="interaction">
    <interactant intactId="EBI-15561295">
        <id>P69596</id>
    </interactant>
    <interactant intactId="EBI-15561295">
        <id>P69596</id>
        <label>N</label>
    </interactant>
    <organismsDiffer>false</organismsDiffer>
    <experiments>4</experiments>
</comment>
<comment type="subcellular location">
    <subcellularLocation>
        <location evidence="1">Virion</location>
    </subcellularLocation>
    <subcellularLocation>
        <location evidence="1">Host endoplasmic reticulum-Golgi intermediate compartment</location>
    </subcellularLocation>
    <subcellularLocation>
        <location evidence="1">Host Golgi apparatus</location>
    </subcellularLocation>
    <text evidence="1">Located inside the virion, complexed with the viral RNA. Probably associates with ER-derived membranes where it participates in viral RNA synthesis and virus budding.</text>
</comment>
<comment type="PTM">
    <text evidence="1">ADP-ribosylated. The ADP-ribosylation is retained in the virion during infection.</text>
</comment>
<comment type="PTM">
    <text evidence="1 5">Phosphorylated on serine and threonine residues.</text>
</comment>
<comment type="similarity">
    <text evidence="1">Belongs to the gammacoronavirus nucleocapsid protein family.</text>
</comment>
<keyword id="KW-0002">3D-structure</keyword>
<keyword id="KW-0013">ADP-ribosylation</keyword>
<keyword id="KW-1015">Disulfide bond</keyword>
<keyword id="KW-1040">Host Golgi apparatus</keyword>
<keyword id="KW-0597">Phosphoprotein</keyword>
<keyword id="KW-1185">Reference proteome</keyword>
<keyword id="KW-0687">Ribonucleoprotein</keyword>
<keyword id="KW-0694">RNA-binding</keyword>
<keyword id="KW-0804">Transcription</keyword>
<keyword id="KW-0805">Transcription regulation</keyword>
<keyword id="KW-0543">Viral nucleoprotein</keyword>
<keyword id="KW-0946">Virion</keyword>
<gene>
    <name evidence="1" type="primary">N</name>
    <name type="ORF">6</name>
</gene>
<proteinExistence type="evidence at protein level"/>
<organismHost>
    <name type="scientific">Gallus gallus</name>
    <name type="common">Chicken</name>
    <dbReference type="NCBI Taxonomy" id="9031"/>
</organismHost>
<accession>P69596</accession>
<accession>Q4ZJS4</accession>
<accession>Q89902</accession>
<name>NCAP_IBVB</name>
<organism>
    <name type="scientific">Avian infectious bronchitis virus (strain Beaudette)</name>
    <name type="common">IBV</name>
    <dbReference type="NCBI Taxonomy" id="11122"/>
    <lineage>
        <taxon>Viruses</taxon>
        <taxon>Riboviria</taxon>
        <taxon>Orthornavirae</taxon>
        <taxon>Pisuviricota</taxon>
        <taxon>Pisoniviricetes</taxon>
        <taxon>Nidovirales</taxon>
        <taxon>Cornidovirineae</taxon>
        <taxon>Coronaviridae</taxon>
        <taxon>Orthocoronavirinae</taxon>
        <taxon>Gammacoronavirus</taxon>
        <taxon>Igacovirus</taxon>
        <taxon>Avian coronavirus</taxon>
    </lineage>
</organism>
<protein>
    <recommendedName>
        <fullName evidence="1">Nucleoprotein</fullName>
    </recommendedName>
    <alternativeName>
        <fullName evidence="1">Nucleocapsid protein</fullName>
        <shortName evidence="1">NC</shortName>
        <shortName evidence="1">Protein N</shortName>
    </alternativeName>
</protein>
<sequence>MASGKAAGKTDAPAPVIKLGGPKPPKVGSSGNASWFQAIKAKKLNTPPPKFEGSGVPDNENIKPSQQHGYWRRQARFKPGKGGRKPVPDAWYFYYTGTGPAADLNWGDTQDGIVWVAAKGADTKSRSNQGTRDPDKFDQYPLRFSDGGPDGNFRWDFIPLNRGRSGRSTAASSAAASRAPSREGSRGRRSDSGDDLIARAAKIIQDQQKKGSRITKAKADEMAHRRYCKRTIPPNYRVDQVFGPRTKGKEGNFGDDKMNEEGIKDGRVTAMLNLVPSSHACLFGSRVTPKLQLDGLHLRFEFTTVVPCDDPQFDNYVKICDQCVDGVGTRPKDDEPKPKSRSSSRPATRGNSPAPRQQRPKKEKKLKKQDDEADKALTSDEERNNAQLEFYDEPKVINWGDAALGENEL</sequence>
<evidence type="ECO:0000255" key="1">
    <source>
        <dbReference type="HAMAP-Rule" id="MF_04097"/>
    </source>
</evidence>
<evidence type="ECO:0000255" key="2">
    <source>
        <dbReference type="PROSITE-ProRule" id="PRU01276"/>
    </source>
</evidence>
<evidence type="ECO:0000255" key="3">
    <source>
        <dbReference type="PROSITE-ProRule" id="PRU01277"/>
    </source>
</evidence>
<evidence type="ECO:0000256" key="4">
    <source>
        <dbReference type="SAM" id="MobiDB-lite"/>
    </source>
</evidence>
<evidence type="ECO:0000269" key="5">
    <source>
    </source>
</evidence>
<evidence type="ECO:0007829" key="6">
    <source>
        <dbReference type="PDB" id="2BTL"/>
    </source>
</evidence>
<evidence type="ECO:0007829" key="7">
    <source>
        <dbReference type="PDB" id="2BXX"/>
    </source>
</evidence>
<evidence type="ECO:0007829" key="8">
    <source>
        <dbReference type="PDB" id="2CA1"/>
    </source>
</evidence>
<feature type="chain" id="PRO_0000105976" description="Nucleoprotein">
    <location>
        <begin position="1"/>
        <end position="409"/>
    </location>
</feature>
<feature type="domain" description="CoV N NTD" evidence="2">
    <location>
        <begin position="31"/>
        <end position="156"/>
    </location>
</feature>
<feature type="domain" description="CoV N CTD" evidence="3">
    <location>
        <begin position="215"/>
        <end position="331"/>
    </location>
</feature>
<feature type="region of interest" description="Disordered" evidence="4">
    <location>
        <begin position="1"/>
        <end position="84"/>
    </location>
</feature>
<feature type="region of interest" description="RNA-binding" evidence="1">
    <location>
        <begin position="29"/>
        <end position="160"/>
    </location>
</feature>
<feature type="region of interest" description="Disordered" evidence="4">
    <location>
        <begin position="121"/>
        <end position="194"/>
    </location>
</feature>
<feature type="region of interest" description="Dimerization" evidence="1">
    <location>
        <begin position="226"/>
        <end position="333"/>
    </location>
</feature>
<feature type="region of interest" description="Disordered" evidence="4">
    <location>
        <begin position="327"/>
        <end position="396"/>
    </location>
</feature>
<feature type="compositionally biased region" description="Low complexity" evidence="4">
    <location>
        <begin position="15"/>
        <end position="31"/>
    </location>
</feature>
<feature type="compositionally biased region" description="Basic residues" evidence="4">
    <location>
        <begin position="70"/>
        <end position="84"/>
    </location>
</feature>
<feature type="compositionally biased region" description="Low complexity" evidence="4">
    <location>
        <begin position="162"/>
        <end position="179"/>
    </location>
</feature>
<feature type="compositionally biased region" description="Basic and acidic residues" evidence="4">
    <location>
        <begin position="180"/>
        <end position="192"/>
    </location>
</feature>
<feature type="compositionally biased region" description="Basic residues" evidence="4">
    <location>
        <begin position="358"/>
        <end position="367"/>
    </location>
</feature>
<feature type="compositionally biased region" description="Basic and acidic residues" evidence="4">
    <location>
        <begin position="368"/>
        <end position="384"/>
    </location>
</feature>
<feature type="modified residue" description="Phosphoserine; by host" evidence="1 5">
    <location>
        <position position="190"/>
    </location>
</feature>
<feature type="modified residue" description="Phosphoserine; by host" evidence="1 5">
    <location>
        <position position="192"/>
    </location>
</feature>
<feature type="modified residue" description="Phosphothreonine; by host" evidence="1 5">
    <location>
        <position position="378"/>
    </location>
</feature>
<feature type="modified residue" description="Phosphoserine; by host" evidence="1 5">
    <location>
        <position position="379"/>
    </location>
</feature>
<feature type="disulfide bond" evidence="1 5">
    <location>
        <begin position="281"/>
        <end position="308"/>
    </location>
</feature>
<feature type="disulfide bond" evidence="1 5">
    <location>
        <begin position="320"/>
        <end position="323"/>
    </location>
</feature>
<feature type="sequence variant" description="In strain: Isolate Vero cell-adapted p65.">
    <original>D</original>
    <variation>Y</variation>
    <location>
        <position position="108"/>
    </location>
</feature>
<feature type="sequence variant" description="In strain: Isolate Vero cell-adapted p65.">
    <original>Q</original>
    <variation>H</variation>
    <location>
        <position position="208"/>
    </location>
</feature>
<feature type="sequence variant" description="In strain: Isolate Vero cell-adapted p65.">
    <original>YD</original>
    <variation>DY</variation>
    <location>
        <begin position="391"/>
        <end position="392"/>
    </location>
</feature>
<feature type="strand" evidence="7">
    <location>
        <begin position="39"/>
        <end position="45"/>
    </location>
</feature>
<feature type="strand" evidence="7">
    <location>
        <begin position="51"/>
        <end position="53"/>
    </location>
</feature>
<feature type="strand" evidence="6">
    <location>
        <begin position="60"/>
        <end position="62"/>
    </location>
</feature>
<feature type="helix" evidence="7">
    <location>
        <begin position="64"/>
        <end position="66"/>
    </location>
</feature>
<feature type="strand" evidence="7">
    <location>
        <begin position="68"/>
        <end position="79"/>
    </location>
</feature>
<feature type="strand" evidence="7">
    <location>
        <begin position="81"/>
        <end position="95"/>
    </location>
</feature>
<feature type="turn" evidence="7">
    <location>
        <begin position="100"/>
        <end position="103"/>
    </location>
</feature>
<feature type="strand" evidence="7">
    <location>
        <begin position="113"/>
        <end position="117"/>
    </location>
</feature>
<feature type="turn" evidence="7">
    <location>
        <begin position="134"/>
        <end position="136"/>
    </location>
</feature>
<feature type="helix" evidence="8">
    <location>
        <begin position="219"/>
        <end position="223"/>
    </location>
</feature>
<feature type="helix" evidence="8">
    <location>
        <begin position="227"/>
        <end position="229"/>
    </location>
</feature>
<feature type="helix" evidence="8">
    <location>
        <begin position="239"/>
        <end position="242"/>
    </location>
</feature>
<feature type="strand" evidence="8">
    <location>
        <begin position="247"/>
        <end position="249"/>
    </location>
</feature>
<feature type="helix" evidence="8">
    <location>
        <begin position="256"/>
        <end position="261"/>
    </location>
</feature>
<feature type="helix" evidence="8">
    <location>
        <begin position="262"/>
        <end position="264"/>
    </location>
</feature>
<feature type="helix" evidence="8">
    <location>
        <begin position="266"/>
        <end position="272"/>
    </location>
</feature>
<feature type="helix" evidence="8">
    <location>
        <begin position="278"/>
        <end position="284"/>
    </location>
</feature>
<feature type="strand" evidence="8">
    <location>
        <begin position="285"/>
        <end position="292"/>
    </location>
</feature>
<feature type="strand" evidence="8">
    <location>
        <begin position="295"/>
        <end position="306"/>
    </location>
</feature>
<feature type="helix" evidence="8">
    <location>
        <begin position="313"/>
        <end position="323"/>
    </location>
</feature>